<name>TR49B_HUMAN</name>
<organism>
    <name type="scientific">Homo sapiens</name>
    <name type="common">Human</name>
    <dbReference type="NCBI Taxonomy" id="9606"/>
    <lineage>
        <taxon>Eukaryota</taxon>
        <taxon>Metazoa</taxon>
        <taxon>Chordata</taxon>
        <taxon>Craniata</taxon>
        <taxon>Vertebrata</taxon>
        <taxon>Euteleostomi</taxon>
        <taxon>Mammalia</taxon>
        <taxon>Eutheria</taxon>
        <taxon>Euarchontoglires</taxon>
        <taxon>Primates</taxon>
        <taxon>Haplorrhini</taxon>
        <taxon>Catarrhini</taxon>
        <taxon>Hominidae</taxon>
        <taxon>Homo</taxon>
    </lineage>
</organism>
<gene>
    <name type="primary">TRIM49B</name>
    <name type="synonym">RNF18B</name>
</gene>
<accession>A6NDI0</accession>
<reference key="1">
    <citation type="journal article" date="2006" name="Nature">
        <title>Human chromosome 11 DNA sequence and analysis including novel gene identification.</title>
        <authorList>
            <person name="Taylor T.D."/>
            <person name="Noguchi H."/>
            <person name="Totoki Y."/>
            <person name="Toyoda A."/>
            <person name="Kuroki Y."/>
            <person name="Dewar K."/>
            <person name="Lloyd C."/>
            <person name="Itoh T."/>
            <person name="Takeda T."/>
            <person name="Kim D.-W."/>
            <person name="She X."/>
            <person name="Barlow K.F."/>
            <person name="Bloom T."/>
            <person name="Bruford E."/>
            <person name="Chang J.L."/>
            <person name="Cuomo C.A."/>
            <person name="Eichler E."/>
            <person name="FitzGerald M.G."/>
            <person name="Jaffe D.B."/>
            <person name="LaButti K."/>
            <person name="Nicol R."/>
            <person name="Park H.-S."/>
            <person name="Seaman C."/>
            <person name="Sougnez C."/>
            <person name="Yang X."/>
            <person name="Zimmer A.R."/>
            <person name="Zody M.C."/>
            <person name="Birren B.W."/>
            <person name="Nusbaum C."/>
            <person name="Fujiyama A."/>
            <person name="Hattori M."/>
            <person name="Rogers J."/>
            <person name="Lander E.S."/>
            <person name="Sakaki Y."/>
        </authorList>
    </citation>
    <scope>NUCLEOTIDE SEQUENCE [LARGE SCALE GENOMIC DNA]</scope>
</reference>
<reference key="2">
    <citation type="journal article" date="2011" name="PLoS Genet.">
        <title>Identification of a genomic reservoir for new TRIM genes in primate genomes.</title>
        <authorList>
            <person name="Han K."/>
            <person name="Lou D.I."/>
            <person name="Sawyer S.L."/>
        </authorList>
    </citation>
    <scope>NUCLEOTIDE SEQUENCE [MRNA] OF 39-223</scope>
</reference>
<sequence length="452" mass="52747">MNSGILQVFQRELICPICMNYFIDPVTIDCGHSFCRPCFYLNWKDSPFLVQCSECTKSTGQINLKTNIHFKKMASLARKVSLWLFLSSEEQMCGTHRETKKMFCEVDRSLLCLLCSSSQEHRDHRHCPIESAAEEHQEKLLQKMQSLWEKACENHRNLNVETTRTRCWKDYVNLRLEAIRAEYQKMPAFHHEEEKHNLEMLKKKGKDIFHRLHLSKAKMAHRREILRGMYEELNEMCHKPDVELLQAFGDILHRSESVLLHMPQPLNPELSAGPITGLRDRLNQFRVHITLHHEEANSDIFLCEILRSMCIGCDHQDVPYFTATPRSFLAWGAQTFTSGKYYWEVHVGDSWNWAFGVCNMYWKEKNQNEKIDGEDGLFLLGCVKNDIQRSLFTTSPLLLQYIPRPTSRVGLFLDCEAKTVSFVDVNQSSLIYTIPNCSFSPPLRPIFCCIHF</sequence>
<proteinExistence type="evidence at transcript level"/>
<keyword id="KW-0479">Metal-binding</keyword>
<keyword id="KW-1185">Reference proteome</keyword>
<keyword id="KW-0862">Zinc</keyword>
<keyword id="KW-0863">Zinc-finger</keyword>
<protein>
    <recommendedName>
        <fullName>Putative tripartite motif-containing protein 49B</fullName>
    </recommendedName>
    <alternativeName>
        <fullName>RING finger protein 18B</fullName>
    </alternativeName>
</protein>
<comment type="similarity">
    <text evidence="4">Belongs to the TRIM/RBCC family.</text>
</comment>
<dbReference type="EMBL" id="AC084851">
    <property type="status" value="NOT_ANNOTATED_CDS"/>
    <property type="molecule type" value="Genomic_DNA"/>
</dbReference>
<dbReference type="EMBL" id="JF968463">
    <property type="status" value="NOT_ANNOTATED_CDS"/>
    <property type="molecule type" value="mRNA"/>
</dbReference>
<dbReference type="CCDS" id="CCDS55762.1"/>
<dbReference type="RefSeq" id="NP_001193555.1">
    <property type="nucleotide sequence ID" value="NM_001206626.2"/>
</dbReference>
<dbReference type="SMR" id="A6NDI0"/>
<dbReference type="FunCoup" id="A6NDI0">
    <property type="interactions" value="12"/>
</dbReference>
<dbReference type="STRING" id="9606.ENSP00000481457"/>
<dbReference type="iPTMnet" id="A6NDI0"/>
<dbReference type="PhosphoSitePlus" id="A6NDI0"/>
<dbReference type="BioMuta" id="TRIM49B"/>
<dbReference type="jPOST" id="A6NDI0"/>
<dbReference type="MassIVE" id="A6NDI0"/>
<dbReference type="PaxDb" id="9606-ENSP00000481457"/>
<dbReference type="PeptideAtlas" id="A6NDI0"/>
<dbReference type="Antibodypedia" id="77057">
    <property type="antibodies" value="2 antibodies from 2 providers"/>
</dbReference>
<dbReference type="DNASU" id="283116"/>
<dbReference type="Ensembl" id="ENST00000332682.9">
    <property type="protein sequence ID" value="ENSP00000330216.7"/>
    <property type="gene ID" value="ENSG00000182053.13"/>
</dbReference>
<dbReference type="Ensembl" id="ENST00000622138.4">
    <property type="protein sequence ID" value="ENSP00000481457.1"/>
    <property type="gene ID" value="ENSG00000182053.13"/>
</dbReference>
<dbReference type="GeneID" id="283116"/>
<dbReference type="KEGG" id="hsa:283116"/>
<dbReference type="MANE-Select" id="ENST00000332682.9">
    <property type="protein sequence ID" value="ENSP00000330216.7"/>
    <property type="RefSeq nucleotide sequence ID" value="NM_001206626.2"/>
    <property type="RefSeq protein sequence ID" value="NP_001193555.1"/>
</dbReference>
<dbReference type="UCSC" id="uc021qix.2">
    <property type="organism name" value="human"/>
</dbReference>
<dbReference type="AGR" id="HGNC:42955"/>
<dbReference type="CTD" id="283116"/>
<dbReference type="DisGeNET" id="283116"/>
<dbReference type="GeneCards" id="TRIM49B"/>
<dbReference type="HGNC" id="HGNC:42955">
    <property type="gene designation" value="TRIM49B"/>
</dbReference>
<dbReference type="HPA" id="ENSG00000182053">
    <property type="expression patterns" value="Not detected"/>
</dbReference>
<dbReference type="neXtProt" id="NX_A6NDI0"/>
<dbReference type="OpenTargets" id="ENSG00000182053"/>
<dbReference type="VEuPathDB" id="HostDB:ENSG00000182053"/>
<dbReference type="eggNOG" id="KOG2177">
    <property type="taxonomic scope" value="Eukaryota"/>
</dbReference>
<dbReference type="GeneTree" id="ENSGT00940000165665"/>
<dbReference type="HOGENOM" id="CLU_013137_0_3_1"/>
<dbReference type="InParanoid" id="A6NDI0"/>
<dbReference type="OMA" id="FRETSHQ"/>
<dbReference type="OrthoDB" id="9511773at2759"/>
<dbReference type="PAN-GO" id="A6NDI0">
    <property type="GO annotations" value="5 GO annotations based on evolutionary models"/>
</dbReference>
<dbReference type="PhylomeDB" id="A6NDI0"/>
<dbReference type="TreeFam" id="TF338674"/>
<dbReference type="SIGNOR" id="A6NDI0"/>
<dbReference type="BioGRID-ORCS" id="283116">
    <property type="hits" value="11 hits in 1061 CRISPR screens"/>
</dbReference>
<dbReference type="GenomeRNAi" id="283116"/>
<dbReference type="Pharos" id="A6NDI0">
    <property type="development level" value="Tdark"/>
</dbReference>
<dbReference type="PRO" id="PR:A6NDI0"/>
<dbReference type="Proteomes" id="UP000005640">
    <property type="component" value="Chromosome 11"/>
</dbReference>
<dbReference type="RNAct" id="A6NDI0">
    <property type="molecule type" value="protein"/>
</dbReference>
<dbReference type="Bgee" id="ENSG00000182053">
    <property type="expression patterns" value="Expressed in male germ line stem cell (sensu Vertebrata) in testis and 3 other cell types or tissues"/>
</dbReference>
<dbReference type="GO" id="GO:0005737">
    <property type="term" value="C:cytoplasm"/>
    <property type="evidence" value="ECO:0000318"/>
    <property type="project" value="GO_Central"/>
</dbReference>
<dbReference type="GO" id="GO:0061630">
    <property type="term" value="F:ubiquitin protein ligase activity"/>
    <property type="evidence" value="ECO:0000318"/>
    <property type="project" value="GO_Central"/>
</dbReference>
<dbReference type="GO" id="GO:0008270">
    <property type="term" value="F:zinc ion binding"/>
    <property type="evidence" value="ECO:0007669"/>
    <property type="project" value="UniProtKB-KW"/>
</dbReference>
<dbReference type="GO" id="GO:0045087">
    <property type="term" value="P:innate immune response"/>
    <property type="evidence" value="ECO:0000318"/>
    <property type="project" value="GO_Central"/>
</dbReference>
<dbReference type="GO" id="GO:0010468">
    <property type="term" value="P:regulation of gene expression"/>
    <property type="evidence" value="ECO:0000318"/>
    <property type="project" value="GO_Central"/>
</dbReference>
<dbReference type="CDD" id="cd16603">
    <property type="entry name" value="RING-HC_TRIM43-like_C-IV"/>
    <property type="match status" value="1"/>
</dbReference>
<dbReference type="Gene3D" id="2.60.120.920">
    <property type="match status" value="1"/>
</dbReference>
<dbReference type="Gene3D" id="3.30.160.60">
    <property type="entry name" value="Classic Zinc Finger"/>
    <property type="match status" value="1"/>
</dbReference>
<dbReference type="Gene3D" id="3.30.40.10">
    <property type="entry name" value="Zinc/RING finger domain, C3HC4 (zinc finger)"/>
    <property type="match status" value="1"/>
</dbReference>
<dbReference type="InterPro" id="IPR001870">
    <property type="entry name" value="B30.2/SPRY"/>
</dbReference>
<dbReference type="InterPro" id="IPR043136">
    <property type="entry name" value="B30.2/SPRY_sf"/>
</dbReference>
<dbReference type="InterPro" id="IPR003879">
    <property type="entry name" value="Butyrophylin_SPRY"/>
</dbReference>
<dbReference type="InterPro" id="IPR013320">
    <property type="entry name" value="ConA-like_dom_sf"/>
</dbReference>
<dbReference type="InterPro" id="IPR003877">
    <property type="entry name" value="SPRY_dom"/>
</dbReference>
<dbReference type="InterPro" id="IPR050143">
    <property type="entry name" value="TRIM/RBCC"/>
</dbReference>
<dbReference type="InterPro" id="IPR000315">
    <property type="entry name" value="Znf_B-box"/>
</dbReference>
<dbReference type="InterPro" id="IPR001841">
    <property type="entry name" value="Znf_RING"/>
</dbReference>
<dbReference type="InterPro" id="IPR013083">
    <property type="entry name" value="Znf_RING/FYVE/PHD"/>
</dbReference>
<dbReference type="PANTHER" id="PTHR24103">
    <property type="entry name" value="E3 UBIQUITIN-PROTEIN LIGASE TRIM"/>
    <property type="match status" value="1"/>
</dbReference>
<dbReference type="Pfam" id="PF00622">
    <property type="entry name" value="SPRY"/>
    <property type="match status" value="1"/>
</dbReference>
<dbReference type="Pfam" id="PF00643">
    <property type="entry name" value="zf-B_box"/>
    <property type="match status" value="1"/>
</dbReference>
<dbReference type="Pfam" id="PF15227">
    <property type="entry name" value="zf-C3HC4_4"/>
    <property type="match status" value="1"/>
</dbReference>
<dbReference type="PRINTS" id="PR01407">
    <property type="entry name" value="BUTYPHLNCDUF"/>
</dbReference>
<dbReference type="SMART" id="SM00336">
    <property type="entry name" value="BBOX"/>
    <property type="match status" value="1"/>
</dbReference>
<dbReference type="SMART" id="SM00184">
    <property type="entry name" value="RING"/>
    <property type="match status" value="1"/>
</dbReference>
<dbReference type="SMART" id="SM00449">
    <property type="entry name" value="SPRY"/>
    <property type="match status" value="1"/>
</dbReference>
<dbReference type="SUPFAM" id="SSF57845">
    <property type="entry name" value="B-box zinc-binding domain"/>
    <property type="match status" value="1"/>
</dbReference>
<dbReference type="SUPFAM" id="SSF49899">
    <property type="entry name" value="Concanavalin A-like lectins/glucanases"/>
    <property type="match status" value="1"/>
</dbReference>
<dbReference type="SUPFAM" id="SSF57850">
    <property type="entry name" value="RING/U-box"/>
    <property type="match status" value="1"/>
</dbReference>
<dbReference type="PROSITE" id="PS50188">
    <property type="entry name" value="B302_SPRY"/>
    <property type="match status" value="1"/>
</dbReference>
<dbReference type="PROSITE" id="PS50119">
    <property type="entry name" value="ZF_BBOX"/>
    <property type="match status" value="1"/>
</dbReference>
<dbReference type="PROSITE" id="PS50089">
    <property type="entry name" value="ZF_RING_2"/>
    <property type="match status" value="1"/>
</dbReference>
<evidence type="ECO:0000255" key="1">
    <source>
        <dbReference type="PROSITE-ProRule" id="PRU00024"/>
    </source>
</evidence>
<evidence type="ECO:0000255" key="2">
    <source>
        <dbReference type="PROSITE-ProRule" id="PRU00175"/>
    </source>
</evidence>
<evidence type="ECO:0000255" key="3">
    <source>
        <dbReference type="PROSITE-ProRule" id="PRU00548"/>
    </source>
</evidence>
<evidence type="ECO:0000305" key="4"/>
<feature type="chain" id="PRO_0000328997" description="Putative tripartite motif-containing protein 49B">
    <location>
        <begin position="1"/>
        <end position="452"/>
    </location>
</feature>
<feature type="domain" description="B30.2/SPRY" evidence="3">
    <location>
        <begin position="269"/>
        <end position="452"/>
    </location>
</feature>
<feature type="zinc finger region" description="RING-type" evidence="2">
    <location>
        <begin position="15"/>
        <end position="56"/>
    </location>
</feature>
<feature type="zinc finger region" description="B box-type" evidence="1">
    <location>
        <begin position="88"/>
        <end position="129"/>
    </location>
</feature>
<feature type="binding site" evidence="1">
    <location>
        <position position="93"/>
    </location>
    <ligand>
        <name>Zn(2+)</name>
        <dbReference type="ChEBI" id="CHEBI:29105"/>
    </ligand>
</feature>
<feature type="binding site" evidence="1">
    <location>
        <position position="96"/>
    </location>
    <ligand>
        <name>Zn(2+)</name>
        <dbReference type="ChEBI" id="CHEBI:29105"/>
    </ligand>
</feature>
<feature type="binding site" evidence="1">
    <location>
        <position position="115"/>
    </location>
    <ligand>
        <name>Zn(2+)</name>
        <dbReference type="ChEBI" id="CHEBI:29105"/>
    </ligand>
</feature>
<feature type="binding site" evidence="1">
    <location>
        <position position="121"/>
    </location>
    <ligand>
        <name>Zn(2+)</name>
        <dbReference type="ChEBI" id="CHEBI:29105"/>
    </ligand>
</feature>
<feature type="sequence variant" id="VAR_042601" description="In dbSNP:rs2696914.">
    <original>L</original>
    <variation>M</variation>
    <location>
        <position position="398"/>
    </location>
</feature>